<sequence length="449" mass="50005">MNLNQIENVYFIGIGGIGMSALARYFKYIGKKVSGYDKTPSMLTSELIESGIDIHFEDNINLIPSNYYVENTLVIFTPAVPASHSEWHYFIERNYQIKKRAEVLGIITKDTFSFAVAGTHGKTTTSSILGHILHQSGADVTAFVGGIVENYNSNLIGTGKTVTVVEADEFDRSFLHLHPDIACVTSMDADHLDIYGTSDAIQASFIEFASKVEDKSKLFITKELPLEGVQCAINEDAVYKAYNVRIEDGNYVFDVQTPSEIMKDLRFGLPGKHNLMNGLMAIAMAKTYGTPTDAIAKAIASFNGIRRRFSYQIKSDKLVYIDDYAHHPTEINAVHQAVRELYPGRKVLAVFQPHLFSRTRDFADGFAESLSQFDEVFLMDIYPARELPMEGITSQWLLDKMTNPNRKIVAKEDLLAEIKASDAPIIVTIGAGDIGEMVPSIKKMLNENI</sequence>
<gene>
    <name evidence="1" type="primary">murC</name>
    <name type="ordered locus">Fjoh_1811</name>
</gene>
<feature type="chain" id="PRO_1000074739" description="UDP-N-acetylmuramate--L-alanine ligase">
    <location>
        <begin position="1"/>
        <end position="449"/>
    </location>
</feature>
<feature type="binding site" evidence="1">
    <location>
        <begin position="118"/>
        <end position="124"/>
    </location>
    <ligand>
        <name>ATP</name>
        <dbReference type="ChEBI" id="CHEBI:30616"/>
    </ligand>
</feature>
<accession>A5FIY4</accession>
<organism>
    <name type="scientific">Flavobacterium johnsoniae (strain ATCC 17061 / DSM 2064 / JCM 8514 / BCRC 14874 / CCUG 350202 / NBRC 14942 / NCIMB 11054 / UW101)</name>
    <name type="common">Cytophaga johnsonae</name>
    <dbReference type="NCBI Taxonomy" id="376686"/>
    <lineage>
        <taxon>Bacteria</taxon>
        <taxon>Pseudomonadati</taxon>
        <taxon>Bacteroidota</taxon>
        <taxon>Flavobacteriia</taxon>
        <taxon>Flavobacteriales</taxon>
        <taxon>Flavobacteriaceae</taxon>
        <taxon>Flavobacterium</taxon>
    </lineage>
</organism>
<name>MURC_FLAJ1</name>
<reference key="1">
    <citation type="journal article" date="2009" name="Appl. Environ. Microbiol.">
        <title>Novel features of the polysaccharide-digesting gliding bacterium Flavobacterium johnsoniae as revealed by genome sequence analysis.</title>
        <authorList>
            <person name="McBride M.J."/>
            <person name="Xie G."/>
            <person name="Martens E.C."/>
            <person name="Lapidus A."/>
            <person name="Henrissat B."/>
            <person name="Rhodes R.G."/>
            <person name="Goltsman E."/>
            <person name="Wang W."/>
            <person name="Xu J."/>
            <person name="Hunnicutt D.W."/>
            <person name="Staroscik A.M."/>
            <person name="Hoover T.R."/>
            <person name="Cheng Y.Q."/>
            <person name="Stein J.L."/>
        </authorList>
    </citation>
    <scope>NUCLEOTIDE SEQUENCE [LARGE SCALE GENOMIC DNA]</scope>
    <source>
        <strain>ATCC 17061 / DSM 2064 / JCM 8514 / BCRC 14874 / CCUG 350202 / NBRC 14942 / NCIMB 11054 / UW101</strain>
    </source>
</reference>
<proteinExistence type="inferred from homology"/>
<dbReference type="EC" id="6.3.2.8" evidence="1"/>
<dbReference type="EMBL" id="CP000685">
    <property type="protein sequence ID" value="ABQ04843.1"/>
    <property type="molecule type" value="Genomic_DNA"/>
</dbReference>
<dbReference type="RefSeq" id="WP_012023887.1">
    <property type="nucleotide sequence ID" value="NC_009441.1"/>
</dbReference>
<dbReference type="SMR" id="A5FIY4"/>
<dbReference type="STRING" id="376686.Fjoh_1811"/>
<dbReference type="KEGG" id="fjo:Fjoh_1811"/>
<dbReference type="eggNOG" id="COG0773">
    <property type="taxonomic scope" value="Bacteria"/>
</dbReference>
<dbReference type="HOGENOM" id="CLU_028104_2_2_10"/>
<dbReference type="OrthoDB" id="9804126at2"/>
<dbReference type="UniPathway" id="UPA00219"/>
<dbReference type="Proteomes" id="UP000006694">
    <property type="component" value="Chromosome"/>
</dbReference>
<dbReference type="GO" id="GO:0005737">
    <property type="term" value="C:cytoplasm"/>
    <property type="evidence" value="ECO:0007669"/>
    <property type="project" value="UniProtKB-SubCell"/>
</dbReference>
<dbReference type="GO" id="GO:0005524">
    <property type="term" value="F:ATP binding"/>
    <property type="evidence" value="ECO:0007669"/>
    <property type="project" value="UniProtKB-UniRule"/>
</dbReference>
<dbReference type="GO" id="GO:0008763">
    <property type="term" value="F:UDP-N-acetylmuramate-L-alanine ligase activity"/>
    <property type="evidence" value="ECO:0007669"/>
    <property type="project" value="UniProtKB-UniRule"/>
</dbReference>
<dbReference type="GO" id="GO:0051301">
    <property type="term" value="P:cell division"/>
    <property type="evidence" value="ECO:0007669"/>
    <property type="project" value="UniProtKB-KW"/>
</dbReference>
<dbReference type="GO" id="GO:0071555">
    <property type="term" value="P:cell wall organization"/>
    <property type="evidence" value="ECO:0007669"/>
    <property type="project" value="UniProtKB-KW"/>
</dbReference>
<dbReference type="GO" id="GO:0009252">
    <property type="term" value="P:peptidoglycan biosynthetic process"/>
    <property type="evidence" value="ECO:0007669"/>
    <property type="project" value="UniProtKB-UniRule"/>
</dbReference>
<dbReference type="GO" id="GO:0008360">
    <property type="term" value="P:regulation of cell shape"/>
    <property type="evidence" value="ECO:0007669"/>
    <property type="project" value="UniProtKB-KW"/>
</dbReference>
<dbReference type="Gene3D" id="3.90.190.20">
    <property type="entry name" value="Mur ligase, C-terminal domain"/>
    <property type="match status" value="1"/>
</dbReference>
<dbReference type="Gene3D" id="3.40.1190.10">
    <property type="entry name" value="Mur-like, catalytic domain"/>
    <property type="match status" value="1"/>
</dbReference>
<dbReference type="Gene3D" id="3.40.50.720">
    <property type="entry name" value="NAD(P)-binding Rossmann-like Domain"/>
    <property type="match status" value="1"/>
</dbReference>
<dbReference type="HAMAP" id="MF_00046">
    <property type="entry name" value="MurC"/>
    <property type="match status" value="1"/>
</dbReference>
<dbReference type="InterPro" id="IPR036565">
    <property type="entry name" value="Mur-like_cat_sf"/>
</dbReference>
<dbReference type="InterPro" id="IPR004101">
    <property type="entry name" value="Mur_ligase_C"/>
</dbReference>
<dbReference type="InterPro" id="IPR036615">
    <property type="entry name" value="Mur_ligase_C_dom_sf"/>
</dbReference>
<dbReference type="InterPro" id="IPR013221">
    <property type="entry name" value="Mur_ligase_cen"/>
</dbReference>
<dbReference type="InterPro" id="IPR000713">
    <property type="entry name" value="Mur_ligase_N"/>
</dbReference>
<dbReference type="InterPro" id="IPR050061">
    <property type="entry name" value="MurCDEF_pg_biosynth"/>
</dbReference>
<dbReference type="InterPro" id="IPR005758">
    <property type="entry name" value="UDP-N-AcMur_Ala_ligase_MurC"/>
</dbReference>
<dbReference type="NCBIfam" id="TIGR01082">
    <property type="entry name" value="murC"/>
    <property type="match status" value="1"/>
</dbReference>
<dbReference type="PANTHER" id="PTHR43445:SF3">
    <property type="entry name" value="UDP-N-ACETYLMURAMATE--L-ALANINE LIGASE"/>
    <property type="match status" value="1"/>
</dbReference>
<dbReference type="PANTHER" id="PTHR43445">
    <property type="entry name" value="UDP-N-ACETYLMURAMATE--L-ALANINE LIGASE-RELATED"/>
    <property type="match status" value="1"/>
</dbReference>
<dbReference type="Pfam" id="PF01225">
    <property type="entry name" value="Mur_ligase"/>
    <property type="match status" value="1"/>
</dbReference>
<dbReference type="Pfam" id="PF02875">
    <property type="entry name" value="Mur_ligase_C"/>
    <property type="match status" value="1"/>
</dbReference>
<dbReference type="Pfam" id="PF08245">
    <property type="entry name" value="Mur_ligase_M"/>
    <property type="match status" value="1"/>
</dbReference>
<dbReference type="SUPFAM" id="SSF51984">
    <property type="entry name" value="MurCD N-terminal domain"/>
    <property type="match status" value="1"/>
</dbReference>
<dbReference type="SUPFAM" id="SSF53623">
    <property type="entry name" value="MurD-like peptide ligases, catalytic domain"/>
    <property type="match status" value="1"/>
</dbReference>
<dbReference type="SUPFAM" id="SSF53244">
    <property type="entry name" value="MurD-like peptide ligases, peptide-binding domain"/>
    <property type="match status" value="1"/>
</dbReference>
<protein>
    <recommendedName>
        <fullName evidence="1">UDP-N-acetylmuramate--L-alanine ligase</fullName>
        <ecNumber evidence="1">6.3.2.8</ecNumber>
    </recommendedName>
    <alternativeName>
        <fullName evidence="1">UDP-N-acetylmuramoyl-L-alanine synthetase</fullName>
    </alternativeName>
</protein>
<keyword id="KW-0067">ATP-binding</keyword>
<keyword id="KW-0131">Cell cycle</keyword>
<keyword id="KW-0132">Cell division</keyword>
<keyword id="KW-0133">Cell shape</keyword>
<keyword id="KW-0961">Cell wall biogenesis/degradation</keyword>
<keyword id="KW-0963">Cytoplasm</keyword>
<keyword id="KW-0436">Ligase</keyword>
<keyword id="KW-0547">Nucleotide-binding</keyword>
<keyword id="KW-0573">Peptidoglycan synthesis</keyword>
<evidence type="ECO:0000255" key="1">
    <source>
        <dbReference type="HAMAP-Rule" id="MF_00046"/>
    </source>
</evidence>
<comment type="function">
    <text evidence="1">Cell wall formation.</text>
</comment>
<comment type="catalytic activity">
    <reaction evidence="1">
        <text>UDP-N-acetyl-alpha-D-muramate + L-alanine + ATP = UDP-N-acetyl-alpha-D-muramoyl-L-alanine + ADP + phosphate + H(+)</text>
        <dbReference type="Rhea" id="RHEA:23372"/>
        <dbReference type="ChEBI" id="CHEBI:15378"/>
        <dbReference type="ChEBI" id="CHEBI:30616"/>
        <dbReference type="ChEBI" id="CHEBI:43474"/>
        <dbReference type="ChEBI" id="CHEBI:57972"/>
        <dbReference type="ChEBI" id="CHEBI:70757"/>
        <dbReference type="ChEBI" id="CHEBI:83898"/>
        <dbReference type="ChEBI" id="CHEBI:456216"/>
        <dbReference type="EC" id="6.3.2.8"/>
    </reaction>
</comment>
<comment type="pathway">
    <text evidence="1">Cell wall biogenesis; peptidoglycan biosynthesis.</text>
</comment>
<comment type="subcellular location">
    <subcellularLocation>
        <location evidence="1">Cytoplasm</location>
    </subcellularLocation>
</comment>
<comment type="similarity">
    <text evidence="1">Belongs to the MurCDEF family.</text>
</comment>